<gene>
    <name evidence="1" type="primary">kmo</name>
    <name type="ordered locus">XOO2429</name>
</gene>
<reference key="1">
    <citation type="journal article" date="2005" name="Nucleic Acids Res.">
        <title>The genome sequence of Xanthomonas oryzae pathovar oryzae KACC10331, the bacterial blight pathogen of rice.</title>
        <authorList>
            <person name="Lee B.-M."/>
            <person name="Park Y.-J."/>
            <person name="Park D.-S."/>
            <person name="Kang H.-W."/>
            <person name="Kim J.-G."/>
            <person name="Song E.-S."/>
            <person name="Park I.-C."/>
            <person name="Yoon U.-H."/>
            <person name="Hahn J.-H."/>
            <person name="Koo B.-S."/>
            <person name="Lee G.-B."/>
            <person name="Kim H."/>
            <person name="Park H.-S."/>
            <person name="Yoon K.-O."/>
            <person name="Kim J.-H."/>
            <person name="Jung C.-H."/>
            <person name="Koh N.-H."/>
            <person name="Seo J.-S."/>
            <person name="Go S.-J."/>
        </authorList>
    </citation>
    <scope>NUCLEOTIDE SEQUENCE [LARGE SCALE GENOMIC DNA]</scope>
    <source>
        <strain>KACC10331 / KXO85</strain>
    </source>
</reference>
<organism>
    <name type="scientific">Xanthomonas oryzae pv. oryzae (strain KACC10331 / KXO85)</name>
    <dbReference type="NCBI Taxonomy" id="291331"/>
    <lineage>
        <taxon>Bacteria</taxon>
        <taxon>Pseudomonadati</taxon>
        <taxon>Pseudomonadota</taxon>
        <taxon>Gammaproteobacteria</taxon>
        <taxon>Lysobacterales</taxon>
        <taxon>Lysobacteraceae</taxon>
        <taxon>Xanthomonas</taxon>
    </lineage>
</organism>
<evidence type="ECO:0000255" key="1">
    <source>
        <dbReference type="HAMAP-Rule" id="MF_01971"/>
    </source>
</evidence>
<comment type="function">
    <text evidence="1">Catalyzes the hydroxylation of L-kynurenine (L-Kyn) to form 3-hydroxy-L-kynurenine (L-3OHKyn). Required for synthesis of quinolinic acid.</text>
</comment>
<comment type="catalytic activity">
    <reaction evidence="1">
        <text>L-kynurenine + NADPH + O2 + H(+) = 3-hydroxy-L-kynurenine + NADP(+) + H2O</text>
        <dbReference type="Rhea" id="RHEA:20545"/>
        <dbReference type="ChEBI" id="CHEBI:15377"/>
        <dbReference type="ChEBI" id="CHEBI:15378"/>
        <dbReference type="ChEBI" id="CHEBI:15379"/>
        <dbReference type="ChEBI" id="CHEBI:57783"/>
        <dbReference type="ChEBI" id="CHEBI:57959"/>
        <dbReference type="ChEBI" id="CHEBI:58125"/>
        <dbReference type="ChEBI" id="CHEBI:58349"/>
        <dbReference type="EC" id="1.14.13.9"/>
    </reaction>
</comment>
<comment type="cofactor">
    <cofactor evidence="1">
        <name>FAD</name>
        <dbReference type="ChEBI" id="CHEBI:57692"/>
    </cofactor>
</comment>
<comment type="pathway">
    <text evidence="1">Cofactor biosynthesis; NAD(+) biosynthesis; quinolinate from L-kynurenine: step 1/3.</text>
</comment>
<comment type="similarity">
    <text evidence="1">Belongs to the aromatic-ring hydroxylase family. KMO subfamily.</text>
</comment>
<protein>
    <recommendedName>
        <fullName evidence="1">Kynurenine 3-monooxygenase</fullName>
        <ecNumber evidence="1">1.14.13.9</ecNumber>
    </recommendedName>
    <alternativeName>
        <fullName evidence="1">Kynurenine 3-hydroxylase</fullName>
    </alternativeName>
</protein>
<name>KMO_XANOR</name>
<keyword id="KW-0274">FAD</keyword>
<keyword id="KW-0285">Flavoprotein</keyword>
<keyword id="KW-0503">Monooxygenase</keyword>
<keyword id="KW-0521">NADP</keyword>
<keyword id="KW-0560">Oxidoreductase</keyword>
<keyword id="KW-0662">Pyridine nucleotide biosynthesis</keyword>
<keyword id="KW-1185">Reference proteome</keyword>
<accession>Q5H038</accession>
<dbReference type="EC" id="1.14.13.9" evidence="1"/>
<dbReference type="EMBL" id="AE013598">
    <property type="protein sequence ID" value="AAW75683.1"/>
    <property type="molecule type" value="Genomic_DNA"/>
</dbReference>
<dbReference type="SMR" id="Q5H038"/>
<dbReference type="STRING" id="291331.XOO2429"/>
<dbReference type="KEGG" id="xoo:XOO2429"/>
<dbReference type="HOGENOM" id="CLU_023210_0_1_6"/>
<dbReference type="UniPathway" id="UPA00253">
    <property type="reaction ID" value="UER00328"/>
</dbReference>
<dbReference type="Proteomes" id="UP000006735">
    <property type="component" value="Chromosome"/>
</dbReference>
<dbReference type="GO" id="GO:0071949">
    <property type="term" value="F:FAD binding"/>
    <property type="evidence" value="ECO:0007669"/>
    <property type="project" value="InterPro"/>
</dbReference>
<dbReference type="GO" id="GO:0004502">
    <property type="term" value="F:kynurenine 3-monooxygenase activity"/>
    <property type="evidence" value="ECO:0007669"/>
    <property type="project" value="UniProtKB-UniRule"/>
</dbReference>
<dbReference type="GO" id="GO:0043420">
    <property type="term" value="P:anthranilate metabolic process"/>
    <property type="evidence" value="ECO:0007669"/>
    <property type="project" value="UniProtKB-UniRule"/>
</dbReference>
<dbReference type="GO" id="GO:0070189">
    <property type="term" value="P:kynurenine metabolic process"/>
    <property type="evidence" value="ECO:0007669"/>
    <property type="project" value="TreeGrafter"/>
</dbReference>
<dbReference type="GO" id="GO:0006569">
    <property type="term" value="P:L-tryptophan catabolic process"/>
    <property type="evidence" value="ECO:0007669"/>
    <property type="project" value="UniProtKB-UniRule"/>
</dbReference>
<dbReference type="GO" id="GO:0009435">
    <property type="term" value="P:NAD biosynthetic process"/>
    <property type="evidence" value="ECO:0007669"/>
    <property type="project" value="UniProtKB-UniPathway"/>
</dbReference>
<dbReference type="GO" id="GO:0019805">
    <property type="term" value="P:quinolinate biosynthetic process"/>
    <property type="evidence" value="ECO:0007669"/>
    <property type="project" value="UniProtKB-UniRule"/>
</dbReference>
<dbReference type="FunFam" id="3.50.50.60:FF:000185">
    <property type="entry name" value="Kynurenine 3-monooxygenase"/>
    <property type="match status" value="1"/>
</dbReference>
<dbReference type="Gene3D" id="3.50.50.60">
    <property type="entry name" value="FAD/NAD(P)-binding domain"/>
    <property type="match status" value="1"/>
</dbReference>
<dbReference type="HAMAP" id="MF_01971">
    <property type="entry name" value="Kynurenine_monooxygenase"/>
    <property type="match status" value="1"/>
</dbReference>
<dbReference type="InterPro" id="IPR002938">
    <property type="entry name" value="FAD-bd"/>
</dbReference>
<dbReference type="InterPro" id="IPR036188">
    <property type="entry name" value="FAD/NAD-bd_sf"/>
</dbReference>
<dbReference type="InterPro" id="IPR027545">
    <property type="entry name" value="Kynurenine_monooxygenase"/>
</dbReference>
<dbReference type="PANTHER" id="PTHR46028">
    <property type="entry name" value="KYNURENINE 3-MONOOXYGENASE"/>
    <property type="match status" value="1"/>
</dbReference>
<dbReference type="PANTHER" id="PTHR46028:SF2">
    <property type="entry name" value="KYNURENINE 3-MONOOXYGENASE"/>
    <property type="match status" value="1"/>
</dbReference>
<dbReference type="Pfam" id="PF01494">
    <property type="entry name" value="FAD_binding_3"/>
    <property type="match status" value="1"/>
</dbReference>
<dbReference type="PRINTS" id="PR00420">
    <property type="entry name" value="RNGMNOXGNASE"/>
</dbReference>
<dbReference type="SUPFAM" id="SSF51905">
    <property type="entry name" value="FAD/NAD(P)-binding domain"/>
    <property type="match status" value="1"/>
</dbReference>
<proteinExistence type="inferred from homology"/>
<feature type="chain" id="PRO_0000361953" description="Kynurenine 3-monooxygenase">
    <location>
        <begin position="1"/>
        <end position="455"/>
    </location>
</feature>
<sequence length="455" mass="50996">MNPVSPRSLTLIGAGLAGCLLAILLSRRGWQITVYERRGDPRIKGYECGRSINLALAERGRHALRQAGAEEVVMAKAVMMRGRMVHPLVGEPQLQRYGRDDSEVIWSIHRAALNVALLDLAEQAGARVHFYRRLHTVDFDAGYARFIDDRDDQPHEIHFQSLIGSDGAGSALRAAMQRKSPLGERTEFLDHSYKELEIPPLPGGGFRIEGNALHIWPRGRYMFIALPNDGGTFTVTLFLPNAGEPSFATTRNGDEAFALFARDFPDALPLIPQLKQHWEEHPPGLLGTLTLDRWHLDGRALLIGDAAHAMVPFHGQGMNCAFEDCVALADQLDAHDDLASAFAAFEAARRDDAGAIQQMALENYLEMRDRVDDPEFLLQRQLEQQLQARWPTRFVPHYTMVTFLRTRYSIALARSEIQREILVEATRGHSDLSRLDWAALETIVHARLEPLDGAH</sequence>